<gene>
    <name evidence="1" type="primary">ruvA</name>
    <name type="ordered locus">AZOSEA22430</name>
    <name type="ORF">ebA3959</name>
</gene>
<keyword id="KW-0963">Cytoplasm</keyword>
<keyword id="KW-0227">DNA damage</keyword>
<keyword id="KW-0233">DNA recombination</keyword>
<keyword id="KW-0234">DNA repair</keyword>
<keyword id="KW-0238">DNA-binding</keyword>
<keyword id="KW-1185">Reference proteome</keyword>
<protein>
    <recommendedName>
        <fullName evidence="1">Holliday junction branch migration complex subunit RuvA</fullName>
    </recommendedName>
</protein>
<name>RUVA_AROAE</name>
<reference key="1">
    <citation type="journal article" date="2005" name="Arch. Microbiol.">
        <title>The genome sequence of an anaerobic aromatic-degrading denitrifying bacterium, strain EbN1.</title>
        <authorList>
            <person name="Rabus R."/>
            <person name="Kube M."/>
            <person name="Heider J."/>
            <person name="Beck A."/>
            <person name="Heitmann K."/>
            <person name="Widdel F."/>
            <person name="Reinhardt R."/>
        </authorList>
    </citation>
    <scope>NUCLEOTIDE SEQUENCE [LARGE SCALE GENOMIC DNA]</scope>
    <source>
        <strain>DSM 19018 / LMG 30748 / EbN1</strain>
    </source>
</reference>
<feature type="chain" id="PRO_0000224836" description="Holliday junction branch migration complex subunit RuvA">
    <location>
        <begin position="1"/>
        <end position="199"/>
    </location>
</feature>
<feature type="region of interest" description="Domain I" evidence="1">
    <location>
        <begin position="1"/>
        <end position="64"/>
    </location>
</feature>
<feature type="region of interest" description="Domain II" evidence="1">
    <location>
        <begin position="65"/>
        <end position="143"/>
    </location>
</feature>
<feature type="region of interest" description="Flexible linker" evidence="1">
    <location>
        <begin position="144"/>
        <end position="152"/>
    </location>
</feature>
<feature type="region of interest" description="Domain III" evidence="1">
    <location>
        <begin position="152"/>
        <end position="199"/>
    </location>
</feature>
<organism>
    <name type="scientific">Aromatoleum aromaticum (strain DSM 19018 / LMG 30748 / EbN1)</name>
    <name type="common">Azoarcus sp. (strain EbN1)</name>
    <dbReference type="NCBI Taxonomy" id="76114"/>
    <lineage>
        <taxon>Bacteria</taxon>
        <taxon>Pseudomonadati</taxon>
        <taxon>Pseudomonadota</taxon>
        <taxon>Betaproteobacteria</taxon>
        <taxon>Rhodocyclales</taxon>
        <taxon>Rhodocyclaceae</taxon>
        <taxon>Aromatoleum</taxon>
    </lineage>
</organism>
<dbReference type="EMBL" id="CR555306">
    <property type="protein sequence ID" value="CAI08368.1"/>
    <property type="molecule type" value="Genomic_DNA"/>
</dbReference>
<dbReference type="RefSeq" id="WP_011238056.1">
    <property type="nucleotide sequence ID" value="NC_006513.1"/>
</dbReference>
<dbReference type="SMR" id="Q5P2U6"/>
<dbReference type="STRING" id="76114.ebA3959"/>
<dbReference type="KEGG" id="eba:ebA3959"/>
<dbReference type="eggNOG" id="COG0632">
    <property type="taxonomic scope" value="Bacteria"/>
</dbReference>
<dbReference type="HOGENOM" id="CLU_087936_0_0_4"/>
<dbReference type="OrthoDB" id="5293449at2"/>
<dbReference type="Proteomes" id="UP000006552">
    <property type="component" value="Chromosome"/>
</dbReference>
<dbReference type="GO" id="GO:0005737">
    <property type="term" value="C:cytoplasm"/>
    <property type="evidence" value="ECO:0007669"/>
    <property type="project" value="UniProtKB-SubCell"/>
</dbReference>
<dbReference type="GO" id="GO:0009379">
    <property type="term" value="C:Holliday junction helicase complex"/>
    <property type="evidence" value="ECO:0007669"/>
    <property type="project" value="InterPro"/>
</dbReference>
<dbReference type="GO" id="GO:0048476">
    <property type="term" value="C:Holliday junction resolvase complex"/>
    <property type="evidence" value="ECO:0007669"/>
    <property type="project" value="UniProtKB-UniRule"/>
</dbReference>
<dbReference type="GO" id="GO:0005524">
    <property type="term" value="F:ATP binding"/>
    <property type="evidence" value="ECO:0007669"/>
    <property type="project" value="InterPro"/>
</dbReference>
<dbReference type="GO" id="GO:0000400">
    <property type="term" value="F:four-way junction DNA binding"/>
    <property type="evidence" value="ECO:0007669"/>
    <property type="project" value="UniProtKB-UniRule"/>
</dbReference>
<dbReference type="GO" id="GO:0009378">
    <property type="term" value="F:four-way junction helicase activity"/>
    <property type="evidence" value="ECO:0007669"/>
    <property type="project" value="InterPro"/>
</dbReference>
<dbReference type="GO" id="GO:0006310">
    <property type="term" value="P:DNA recombination"/>
    <property type="evidence" value="ECO:0007669"/>
    <property type="project" value="UniProtKB-UniRule"/>
</dbReference>
<dbReference type="GO" id="GO:0006281">
    <property type="term" value="P:DNA repair"/>
    <property type="evidence" value="ECO:0007669"/>
    <property type="project" value="UniProtKB-UniRule"/>
</dbReference>
<dbReference type="CDD" id="cd14332">
    <property type="entry name" value="UBA_RuvA_C"/>
    <property type="match status" value="1"/>
</dbReference>
<dbReference type="Gene3D" id="1.10.150.20">
    <property type="entry name" value="5' to 3' exonuclease, C-terminal subdomain"/>
    <property type="match status" value="1"/>
</dbReference>
<dbReference type="Gene3D" id="1.10.8.10">
    <property type="entry name" value="DNA helicase RuvA subunit, C-terminal domain"/>
    <property type="match status" value="1"/>
</dbReference>
<dbReference type="Gene3D" id="2.40.50.140">
    <property type="entry name" value="Nucleic acid-binding proteins"/>
    <property type="match status" value="1"/>
</dbReference>
<dbReference type="HAMAP" id="MF_00031">
    <property type="entry name" value="DNA_HJ_migration_RuvA"/>
    <property type="match status" value="1"/>
</dbReference>
<dbReference type="InterPro" id="IPR013849">
    <property type="entry name" value="DNA_helicase_Holl-junc_RuvA_I"/>
</dbReference>
<dbReference type="InterPro" id="IPR003583">
    <property type="entry name" value="Hlx-hairpin-Hlx_DNA-bd_motif"/>
</dbReference>
<dbReference type="InterPro" id="IPR012340">
    <property type="entry name" value="NA-bd_OB-fold"/>
</dbReference>
<dbReference type="InterPro" id="IPR000085">
    <property type="entry name" value="RuvA"/>
</dbReference>
<dbReference type="InterPro" id="IPR010994">
    <property type="entry name" value="RuvA_2-like"/>
</dbReference>
<dbReference type="InterPro" id="IPR011114">
    <property type="entry name" value="RuvA_C"/>
</dbReference>
<dbReference type="InterPro" id="IPR036267">
    <property type="entry name" value="RuvA_C_sf"/>
</dbReference>
<dbReference type="NCBIfam" id="TIGR00084">
    <property type="entry name" value="ruvA"/>
    <property type="match status" value="1"/>
</dbReference>
<dbReference type="Pfam" id="PF14520">
    <property type="entry name" value="HHH_5"/>
    <property type="match status" value="1"/>
</dbReference>
<dbReference type="Pfam" id="PF07499">
    <property type="entry name" value="RuvA_C"/>
    <property type="match status" value="1"/>
</dbReference>
<dbReference type="Pfam" id="PF01330">
    <property type="entry name" value="RuvA_N"/>
    <property type="match status" value="1"/>
</dbReference>
<dbReference type="SMART" id="SM00278">
    <property type="entry name" value="HhH1"/>
    <property type="match status" value="2"/>
</dbReference>
<dbReference type="SUPFAM" id="SSF46929">
    <property type="entry name" value="DNA helicase RuvA subunit, C-terminal domain"/>
    <property type="match status" value="1"/>
</dbReference>
<dbReference type="SUPFAM" id="SSF50249">
    <property type="entry name" value="Nucleic acid-binding proteins"/>
    <property type="match status" value="1"/>
</dbReference>
<dbReference type="SUPFAM" id="SSF47781">
    <property type="entry name" value="RuvA domain 2-like"/>
    <property type="match status" value="1"/>
</dbReference>
<comment type="function">
    <text evidence="1">The RuvA-RuvB-RuvC complex processes Holliday junction (HJ) DNA during genetic recombination and DNA repair, while the RuvA-RuvB complex plays an important role in the rescue of blocked DNA replication forks via replication fork reversal (RFR). RuvA specifically binds to HJ cruciform DNA, conferring on it an open structure. The RuvB hexamer acts as an ATP-dependent pump, pulling dsDNA into and through the RuvAB complex. HJ branch migration allows RuvC to scan DNA until it finds its consensus sequence, where it cleaves and resolves the cruciform DNA.</text>
</comment>
<comment type="subunit">
    <text evidence="1">Homotetramer. Forms an RuvA(8)-RuvB(12)-Holliday junction (HJ) complex. HJ DNA is sandwiched between 2 RuvA tetramers; dsDNA enters through RuvA and exits via RuvB. An RuvB hexamer assembles on each DNA strand where it exits the tetramer. Each RuvB hexamer is contacted by two RuvA subunits (via domain III) on 2 adjacent RuvB subunits; this complex drives branch migration. In the full resolvosome a probable DNA-RuvA(4)-RuvB(12)-RuvC(2) complex forms which resolves the HJ.</text>
</comment>
<comment type="subcellular location">
    <subcellularLocation>
        <location evidence="1">Cytoplasm</location>
    </subcellularLocation>
</comment>
<comment type="domain">
    <text evidence="1">Has three domains with a flexible linker between the domains II and III and assumes an 'L' shape. Domain III is highly mobile and contacts RuvB.</text>
</comment>
<comment type="similarity">
    <text evidence="1">Belongs to the RuvA family.</text>
</comment>
<sequence>MIGRITGILLEKNPPQIVVDTHGVGYEIDVPMSTFYGLPATGESLSLFTHLAIREDGHFLYGFASADERAAFRQLLKVSGIGARTALSVLSGLSVSDLAQAVALQETGRLVKIPGIGKKTAERLLLELRDKLGRALPGFGASTVPGAAAQPADSRSDILNALLALGYSDKEAQSALKAIPPETGVSDGIRQALKLLSKA</sequence>
<accession>Q5P2U6</accession>
<proteinExistence type="inferred from homology"/>
<evidence type="ECO:0000255" key="1">
    <source>
        <dbReference type="HAMAP-Rule" id="MF_00031"/>
    </source>
</evidence>